<accession>Q6FZN0</accession>
<sequence>MALPDFTMHQLLEAGVHFGHQTHRWNPKMIRYIYGQRNNIHIIDLAQTVPLLHQALKLVSDTVARGGRILFVGTKRQASDIIADAANRSAQYYVNARWLGGMLTNWKTISNSIHRLRKLDKILATETQGFTKKERLNLERDREKLNRALGGIKDMGSVPDLIFIIDTNKENIAIQEAKRLGIPVIAIIDTNCNPDNVDHPIPGNDDASRAISLYCDLFARAALDGIARQQGAMGIDLGAQADAPVKPILENTIPVSE</sequence>
<comment type="similarity">
    <text evidence="1">Belongs to the universal ribosomal protein uS2 family.</text>
</comment>
<evidence type="ECO:0000255" key="1">
    <source>
        <dbReference type="HAMAP-Rule" id="MF_00291"/>
    </source>
</evidence>
<evidence type="ECO:0000305" key="2"/>
<organism>
    <name type="scientific">Bartonella quintana (strain Toulouse)</name>
    <name type="common">Rochalimaea quintana</name>
    <dbReference type="NCBI Taxonomy" id="283165"/>
    <lineage>
        <taxon>Bacteria</taxon>
        <taxon>Pseudomonadati</taxon>
        <taxon>Pseudomonadota</taxon>
        <taxon>Alphaproteobacteria</taxon>
        <taxon>Hyphomicrobiales</taxon>
        <taxon>Bartonellaceae</taxon>
        <taxon>Bartonella</taxon>
    </lineage>
</organism>
<gene>
    <name evidence="1" type="primary">rpsB</name>
    <name type="ordered locus">BQ07010</name>
</gene>
<reference key="1">
    <citation type="journal article" date="2004" name="Proc. Natl. Acad. Sci. U.S.A.">
        <title>The louse-borne human pathogen Bartonella quintana is a genomic derivative of the zoonotic agent Bartonella henselae.</title>
        <authorList>
            <person name="Alsmark U.C.M."/>
            <person name="Frank A.C."/>
            <person name="Karlberg E.O."/>
            <person name="Legault B.-A."/>
            <person name="Ardell D.H."/>
            <person name="Canbaeck B."/>
            <person name="Eriksson A.-S."/>
            <person name="Naeslund A.K."/>
            <person name="Handley S.A."/>
            <person name="Huvet M."/>
            <person name="La Scola B."/>
            <person name="Holmberg M."/>
            <person name="Andersson S.G.E."/>
        </authorList>
    </citation>
    <scope>NUCLEOTIDE SEQUENCE [LARGE SCALE GENOMIC DNA]</scope>
    <source>
        <strain>Toulouse</strain>
    </source>
</reference>
<protein>
    <recommendedName>
        <fullName evidence="1">Small ribosomal subunit protein uS2</fullName>
    </recommendedName>
    <alternativeName>
        <fullName evidence="2">30S ribosomal protein S2</fullName>
    </alternativeName>
</protein>
<dbReference type="EMBL" id="BX897700">
    <property type="protein sequence ID" value="CAF26190.1"/>
    <property type="molecule type" value="Genomic_DNA"/>
</dbReference>
<dbReference type="RefSeq" id="WP_011179445.1">
    <property type="nucleotide sequence ID" value="NC_005955.1"/>
</dbReference>
<dbReference type="SMR" id="Q6FZN0"/>
<dbReference type="GeneID" id="56532942"/>
<dbReference type="KEGG" id="bqu:BQ07010"/>
<dbReference type="eggNOG" id="COG0052">
    <property type="taxonomic scope" value="Bacteria"/>
</dbReference>
<dbReference type="HOGENOM" id="CLU_040318_2_1_5"/>
<dbReference type="OrthoDB" id="9808036at2"/>
<dbReference type="Proteomes" id="UP000000597">
    <property type="component" value="Chromosome"/>
</dbReference>
<dbReference type="GO" id="GO:0022627">
    <property type="term" value="C:cytosolic small ribosomal subunit"/>
    <property type="evidence" value="ECO:0007669"/>
    <property type="project" value="TreeGrafter"/>
</dbReference>
<dbReference type="GO" id="GO:0003735">
    <property type="term" value="F:structural constituent of ribosome"/>
    <property type="evidence" value="ECO:0007669"/>
    <property type="project" value="InterPro"/>
</dbReference>
<dbReference type="GO" id="GO:0006412">
    <property type="term" value="P:translation"/>
    <property type="evidence" value="ECO:0007669"/>
    <property type="project" value="UniProtKB-UniRule"/>
</dbReference>
<dbReference type="CDD" id="cd01425">
    <property type="entry name" value="RPS2"/>
    <property type="match status" value="1"/>
</dbReference>
<dbReference type="Gene3D" id="3.40.50.10490">
    <property type="entry name" value="Glucose-6-phosphate isomerase like protein, domain 1"/>
    <property type="match status" value="1"/>
</dbReference>
<dbReference type="Gene3D" id="1.10.287.610">
    <property type="entry name" value="Helix hairpin bin"/>
    <property type="match status" value="1"/>
</dbReference>
<dbReference type="HAMAP" id="MF_00291_B">
    <property type="entry name" value="Ribosomal_uS2_B"/>
    <property type="match status" value="1"/>
</dbReference>
<dbReference type="InterPro" id="IPR001865">
    <property type="entry name" value="Ribosomal_uS2"/>
</dbReference>
<dbReference type="InterPro" id="IPR005706">
    <property type="entry name" value="Ribosomal_uS2_bac/mit/plastid"/>
</dbReference>
<dbReference type="InterPro" id="IPR018130">
    <property type="entry name" value="Ribosomal_uS2_CS"/>
</dbReference>
<dbReference type="InterPro" id="IPR023591">
    <property type="entry name" value="Ribosomal_uS2_flav_dom_sf"/>
</dbReference>
<dbReference type="NCBIfam" id="TIGR01011">
    <property type="entry name" value="rpsB_bact"/>
    <property type="match status" value="1"/>
</dbReference>
<dbReference type="PANTHER" id="PTHR12534">
    <property type="entry name" value="30S RIBOSOMAL PROTEIN S2 PROKARYOTIC AND ORGANELLAR"/>
    <property type="match status" value="1"/>
</dbReference>
<dbReference type="PANTHER" id="PTHR12534:SF0">
    <property type="entry name" value="SMALL RIBOSOMAL SUBUNIT PROTEIN US2M"/>
    <property type="match status" value="1"/>
</dbReference>
<dbReference type="Pfam" id="PF00318">
    <property type="entry name" value="Ribosomal_S2"/>
    <property type="match status" value="1"/>
</dbReference>
<dbReference type="PRINTS" id="PR00395">
    <property type="entry name" value="RIBOSOMALS2"/>
</dbReference>
<dbReference type="SUPFAM" id="SSF52313">
    <property type="entry name" value="Ribosomal protein S2"/>
    <property type="match status" value="1"/>
</dbReference>
<dbReference type="PROSITE" id="PS00962">
    <property type="entry name" value="RIBOSOMAL_S2_1"/>
    <property type="match status" value="1"/>
</dbReference>
<dbReference type="PROSITE" id="PS00963">
    <property type="entry name" value="RIBOSOMAL_S2_2"/>
    <property type="match status" value="1"/>
</dbReference>
<keyword id="KW-0687">Ribonucleoprotein</keyword>
<keyword id="KW-0689">Ribosomal protein</keyword>
<name>RS2_BARQU</name>
<proteinExistence type="inferred from homology"/>
<feature type="chain" id="PRO_0000134134" description="Small ribosomal subunit protein uS2">
    <location>
        <begin position="1"/>
        <end position="257"/>
    </location>
</feature>